<organism>
    <name type="scientific">Saccharomyces cerevisiae (strain ATCC 204508 / S288c)</name>
    <name type="common">Baker's yeast</name>
    <dbReference type="NCBI Taxonomy" id="559292"/>
    <lineage>
        <taxon>Eukaryota</taxon>
        <taxon>Fungi</taxon>
        <taxon>Dikarya</taxon>
        <taxon>Ascomycota</taxon>
        <taxon>Saccharomycotina</taxon>
        <taxon>Saccharomycetes</taxon>
        <taxon>Saccharomycetales</taxon>
        <taxon>Saccharomycetaceae</taxon>
        <taxon>Saccharomyces</taxon>
    </lineage>
</organism>
<gene>
    <name evidence="5" type="primary">DDI3</name>
    <name evidence="9" type="ordered locus">YNL335W</name>
    <name type="ORF">N0280</name>
</gene>
<comment type="function">
    <text evidence="4">Cyanamide hydratase involved in the detoxification and/or utilization of cyanamide, a toxic nitrile compound distributed widely in the environment.</text>
</comment>
<comment type="catalytic activity">
    <reaction evidence="4">
        <text>urea = cyanamide + H2O</text>
        <dbReference type="Rhea" id="RHEA:23056"/>
        <dbReference type="ChEBI" id="CHEBI:15377"/>
        <dbReference type="ChEBI" id="CHEBI:16199"/>
        <dbReference type="ChEBI" id="CHEBI:16698"/>
        <dbReference type="EC" id="4.2.1.69"/>
    </reaction>
</comment>
<comment type="cofactor">
    <cofactor evidence="1">
        <name>Zn(2+)</name>
        <dbReference type="ChEBI" id="CHEBI:29105"/>
    </cofactor>
</comment>
<comment type="biophysicochemical properties">
    <kinetics>
        <KM evidence="4">17.3 mM for cyanamide</KM>
    </kinetics>
</comment>
<comment type="subunit">
    <text evidence="1">Homohexamer.</text>
</comment>
<comment type="induction">
    <text evidence="3 4">Expression is induced by DNA-damaging agents such as methyl methanesulfonate (MMS) or dimethyl sulfate (DMS) (PubMed:18485869, PubMed:25847245). Massively induced by cyanamide (PubMed:25847245).</text>
</comment>
<comment type="disruption phenotype">
    <text evidence="4">The double deletion of DDI2 and DDI3 compromizes cellular resistance to cyanamide by impairing its metabolization.</text>
</comment>
<comment type="miscellaneous">
    <text evidence="7">DDI2 and DDI3 are duplicated genes located on different chromosomes, with identical ORF sequences and only one nucleotide difference in their promoter (up to 1 kb) regions.</text>
</comment>
<comment type="similarity">
    <text evidence="8">Belongs to the cyanamide dehydrase family.</text>
</comment>
<name>DDI3_YEAST</name>
<feature type="chain" id="PRO_0000397875" description="Cyanamide hydratase DDI3">
    <location>
        <begin position="1"/>
        <end position="225"/>
    </location>
</feature>
<feature type="domain" description="HD" evidence="2">
    <location>
        <begin position="52"/>
        <end position="162"/>
    </location>
</feature>
<protein>
    <recommendedName>
        <fullName evidence="7">Cyanamide hydratase DDI3</fullName>
        <shortName evidence="7">CAH</shortName>
        <ecNumber evidence="4">4.2.1.69</ecNumber>
    </recommendedName>
    <alternativeName>
        <fullName evidence="6">DNA damage-inducible protein 3</fullName>
    </alternativeName>
</protein>
<reference key="1">
    <citation type="journal article" date="1997" name="Nature">
        <title>The nucleotide sequence of Saccharomyces cerevisiae chromosome XIV and its evolutionary implications.</title>
        <authorList>
            <person name="Philippsen P."/>
            <person name="Kleine K."/>
            <person name="Poehlmann R."/>
            <person name="Duesterhoeft A."/>
            <person name="Hamberg K."/>
            <person name="Hegemann J.H."/>
            <person name="Obermaier B."/>
            <person name="Urrestarazu L.A."/>
            <person name="Aert R."/>
            <person name="Albermann K."/>
            <person name="Altmann R."/>
            <person name="Andre B."/>
            <person name="Baladron V."/>
            <person name="Ballesta J.P.G."/>
            <person name="Becam A.-M."/>
            <person name="Beinhauer J.D."/>
            <person name="Boskovic J."/>
            <person name="Buitrago M.J."/>
            <person name="Bussereau F."/>
            <person name="Coster F."/>
            <person name="Crouzet M."/>
            <person name="D'Angelo M."/>
            <person name="Dal Pero F."/>
            <person name="De Antoni A."/>
            <person name="del Rey F."/>
            <person name="Doignon F."/>
            <person name="Domdey H."/>
            <person name="Dubois E."/>
            <person name="Fiedler T.A."/>
            <person name="Fleig U."/>
            <person name="Floeth M."/>
            <person name="Fritz C."/>
            <person name="Gaillardin C."/>
            <person name="Garcia-Cantalejo J.M."/>
            <person name="Glansdorff N."/>
            <person name="Goffeau A."/>
            <person name="Gueldener U."/>
            <person name="Herbert C.J."/>
            <person name="Heumann K."/>
            <person name="Heuss-Neitzel D."/>
            <person name="Hilbert H."/>
            <person name="Hinni K."/>
            <person name="Iraqui Houssaini I."/>
            <person name="Jacquet M."/>
            <person name="Jimenez A."/>
            <person name="Jonniaux J.-L."/>
            <person name="Karpfinger-Hartl L."/>
            <person name="Lanfranchi G."/>
            <person name="Lepingle A."/>
            <person name="Levesque H."/>
            <person name="Lyck R."/>
            <person name="Maftahi M."/>
            <person name="Mallet L."/>
            <person name="Maurer C.T.C."/>
            <person name="Messenguy F."/>
            <person name="Mewes H.-W."/>
            <person name="Moestl D."/>
            <person name="Nasr F."/>
            <person name="Nicaud J.-M."/>
            <person name="Niedenthal R.K."/>
            <person name="Pandolfo D."/>
            <person name="Pierard A."/>
            <person name="Piravandi E."/>
            <person name="Planta R.J."/>
            <person name="Pohl T.M."/>
            <person name="Purnelle B."/>
            <person name="Rebischung C."/>
            <person name="Remacha M.A."/>
            <person name="Revuelta J.L."/>
            <person name="Rinke M."/>
            <person name="Saiz J.E."/>
            <person name="Sartorello F."/>
            <person name="Scherens B."/>
            <person name="Sen-Gupta M."/>
            <person name="Soler-Mira A."/>
            <person name="Urbanus J.H.M."/>
            <person name="Valle G."/>
            <person name="Van Dyck L."/>
            <person name="Verhasselt P."/>
            <person name="Vierendeels F."/>
            <person name="Vissers S."/>
            <person name="Voet M."/>
            <person name="Volckaert G."/>
            <person name="Wach A."/>
            <person name="Wambutt R."/>
            <person name="Wedler H."/>
            <person name="Zollner A."/>
            <person name="Hani J."/>
        </authorList>
    </citation>
    <scope>NUCLEOTIDE SEQUENCE [LARGE SCALE GENOMIC DNA]</scope>
    <source>
        <strain>ATCC 204508 / S288c</strain>
    </source>
</reference>
<reference key="2">
    <citation type="journal article" date="2014" name="G3 (Bethesda)">
        <title>The reference genome sequence of Saccharomyces cerevisiae: Then and now.</title>
        <authorList>
            <person name="Engel S.R."/>
            <person name="Dietrich F.S."/>
            <person name="Fisk D.G."/>
            <person name="Binkley G."/>
            <person name="Balakrishnan R."/>
            <person name="Costanzo M.C."/>
            <person name="Dwight S.S."/>
            <person name="Hitz B.C."/>
            <person name="Karra K."/>
            <person name="Nash R.S."/>
            <person name="Weng S."/>
            <person name="Wong E.D."/>
            <person name="Lloyd P."/>
            <person name="Skrzypek M.S."/>
            <person name="Miyasato S.R."/>
            <person name="Simison M."/>
            <person name="Cherry J.M."/>
        </authorList>
    </citation>
    <scope>GENOME REANNOTATION</scope>
    <source>
        <strain>ATCC 204508 / S288c</strain>
    </source>
</reference>
<reference key="3">
    <citation type="journal article" date="2007" name="Genome Res.">
        <title>Approaching a complete repository of sequence-verified protein-encoding clones for Saccharomyces cerevisiae.</title>
        <authorList>
            <person name="Hu Y."/>
            <person name="Rolfs A."/>
            <person name="Bhullar B."/>
            <person name="Murthy T.V.S."/>
            <person name="Zhu C."/>
            <person name="Berger M.F."/>
            <person name="Camargo A.A."/>
            <person name="Kelley F."/>
            <person name="McCarron S."/>
            <person name="Jepson D."/>
            <person name="Richardson A."/>
            <person name="Raphael J."/>
            <person name="Moreira D."/>
            <person name="Taycher E."/>
            <person name="Zuo D."/>
            <person name="Mohr S."/>
            <person name="Kane M.F."/>
            <person name="Williamson J."/>
            <person name="Simpson A.J.G."/>
            <person name="Bulyk M.L."/>
            <person name="Harlow E."/>
            <person name="Marsischky G."/>
            <person name="Kolodner R.D."/>
            <person name="LaBaer J."/>
        </authorList>
    </citation>
    <scope>NUCLEOTIDE SEQUENCE [GENOMIC DNA]</scope>
    <source>
        <strain>ATCC 204508 / S288c</strain>
    </source>
</reference>
<reference key="4">
    <citation type="journal article" date="2008" name="Cell">
        <title>Rad6-Rad18 mediates a eukaryotic SOS response by ubiquitinating the 9-1-1 checkpoint clamp.</title>
        <authorList>
            <person name="Fu Y."/>
            <person name="Zhu Y."/>
            <person name="Zhang K."/>
            <person name="Yeung M."/>
            <person name="Durocher D."/>
            <person name="Xiao W."/>
        </authorList>
    </citation>
    <scope>INDUCTION</scope>
</reference>
<reference key="5">
    <citation type="journal article" date="2015" name="J. Biol. Chem.">
        <title>Two duplicated genes DDI2 and DDI3 in budding yeast encode a cyanamide hydratase and are induced by cyanamide.</title>
        <authorList>
            <person name="Li J."/>
            <person name="Biss M."/>
            <person name="Fu Y."/>
            <person name="Xu X."/>
            <person name="Moore S.A."/>
            <person name="Xiao W."/>
        </authorList>
    </citation>
    <scope>INDUCTION</scope>
    <scope>FUNCTION</scope>
    <scope>DISRUPTION PHENOTYPE</scope>
    <scope>CATALYTIC ACTIVITY</scope>
    <scope>BIOPHYSICOCHEMICAL PROPERTIES</scope>
</reference>
<accession>P0CH64</accession>
<accession>D6VTG9</accession>
<accession>P43543</accession>
<proteinExistence type="evidence at protein level"/>
<evidence type="ECO:0000250" key="1">
    <source>
        <dbReference type="UniProtKB" id="P22143"/>
    </source>
</evidence>
<evidence type="ECO:0000255" key="2">
    <source>
        <dbReference type="PROSITE-ProRule" id="PRU01175"/>
    </source>
</evidence>
<evidence type="ECO:0000269" key="3">
    <source>
    </source>
</evidence>
<evidence type="ECO:0000269" key="4">
    <source>
    </source>
</evidence>
<evidence type="ECO:0000303" key="5">
    <source>
    </source>
</evidence>
<evidence type="ECO:0000303" key="6">
    <source>
    </source>
</evidence>
<evidence type="ECO:0000303" key="7">
    <source>
    </source>
</evidence>
<evidence type="ECO:0000305" key="8"/>
<evidence type="ECO:0000312" key="9">
    <source>
        <dbReference type="SGD" id="S000005279"/>
    </source>
</evidence>
<dbReference type="EC" id="4.2.1.69" evidence="4"/>
<dbReference type="EMBL" id="Z71611">
    <property type="protein sequence ID" value="CAA96269.1"/>
    <property type="molecule type" value="Genomic_DNA"/>
</dbReference>
<dbReference type="EMBL" id="AY692690">
    <property type="protein sequence ID" value="AAT92709.1"/>
    <property type="molecule type" value="Genomic_DNA"/>
</dbReference>
<dbReference type="EMBL" id="BK006947">
    <property type="protein sequence ID" value="DAA10228.1"/>
    <property type="molecule type" value="Genomic_DNA"/>
</dbReference>
<dbReference type="PIR" id="S56194">
    <property type="entry name" value="S56194"/>
</dbReference>
<dbReference type="RefSeq" id="NP_014064.1">
    <property type="nucleotide sequence ID" value="NM_001183173.1"/>
</dbReference>
<dbReference type="RefSeq" id="NP_116594.1">
    <property type="nucleotide sequence ID" value="NM_001179906.1"/>
</dbReference>
<dbReference type="SMR" id="P0CH64"/>
<dbReference type="BioGRID" id="31086">
    <property type="interactions" value="49"/>
</dbReference>
<dbReference type="BioGRID" id="35506">
    <property type="interactions" value="4"/>
</dbReference>
<dbReference type="FunCoup" id="P0CH64">
    <property type="interactions" value="27"/>
</dbReference>
<dbReference type="EnsemblFungi" id="YFL061W_mRNA">
    <property type="protein sequence ID" value="YFL061W"/>
    <property type="gene ID" value="YFL061W"/>
</dbReference>
<dbReference type="EnsemblFungi" id="YNL335W_mRNA">
    <property type="protein sequence ID" value="YNL335W"/>
    <property type="gene ID" value="YNL335W"/>
</dbReference>
<dbReference type="GeneID" id="850483"/>
<dbReference type="GeneID" id="855381"/>
<dbReference type="KEGG" id="sce:YFL061W"/>
<dbReference type="KEGG" id="sce:YNL335W"/>
<dbReference type="AGR" id="SGD:S000005279"/>
<dbReference type="SGD" id="S000005279">
    <property type="gene designation" value="DDI3"/>
</dbReference>
<dbReference type="VEuPathDB" id="FungiDB:YFL061W"/>
<dbReference type="VEuPathDB" id="FungiDB:YNL335W"/>
<dbReference type="GeneTree" id="ENSGT00940000176818"/>
<dbReference type="HOGENOM" id="CLU_079935_0_0_1"/>
<dbReference type="InParanoid" id="P0CH64"/>
<dbReference type="OMA" id="PWAHTTH"/>
<dbReference type="OrthoDB" id="10033309at2759"/>
<dbReference type="BioCyc" id="YEAST:G3O-33318-MONOMER"/>
<dbReference type="PRO" id="PR:P0CH64"/>
<dbReference type="Proteomes" id="UP000002311">
    <property type="component" value="Chromosome XIV"/>
</dbReference>
<dbReference type="RNAct" id="P0CH64">
    <property type="molecule type" value="protein"/>
</dbReference>
<dbReference type="ExpressionAtlas" id="P0CH64">
    <property type="expression patterns" value="baseline and differential"/>
</dbReference>
<dbReference type="GO" id="GO:0018820">
    <property type="term" value="F:cyanamide hydratase activity"/>
    <property type="evidence" value="ECO:0000314"/>
    <property type="project" value="SGD"/>
</dbReference>
<dbReference type="GO" id="GO:0018890">
    <property type="term" value="P:cyanamide metabolic process"/>
    <property type="evidence" value="ECO:0000315"/>
    <property type="project" value="SGD"/>
</dbReference>
<dbReference type="CDD" id="cd00077">
    <property type="entry name" value="HDc"/>
    <property type="match status" value="1"/>
</dbReference>
<dbReference type="FunFam" id="1.10.3210.10:FF:000027">
    <property type="entry name" value="Urea hydro-lyase/cyanamide hydratase"/>
    <property type="match status" value="1"/>
</dbReference>
<dbReference type="Gene3D" id="1.10.3210.10">
    <property type="entry name" value="Hypothetical protein af1432"/>
    <property type="match status" value="1"/>
</dbReference>
<dbReference type="InterPro" id="IPR017771">
    <property type="entry name" value="Cyanamide_hydratase_HD"/>
</dbReference>
<dbReference type="InterPro" id="IPR003607">
    <property type="entry name" value="HD/PDEase_dom"/>
</dbReference>
<dbReference type="InterPro" id="IPR006674">
    <property type="entry name" value="HD_domain"/>
</dbReference>
<dbReference type="NCBIfam" id="TIGR03401">
    <property type="entry name" value="cyanamide_fam"/>
    <property type="match status" value="1"/>
</dbReference>
<dbReference type="PANTHER" id="PTHR35569">
    <property type="entry name" value="CYANAMIDE HYDRATASE DDI2-RELATED"/>
    <property type="match status" value="1"/>
</dbReference>
<dbReference type="PANTHER" id="PTHR35569:SF1">
    <property type="entry name" value="CYANAMIDE HYDRATASE DDI2-RELATED"/>
    <property type="match status" value="1"/>
</dbReference>
<dbReference type="Pfam" id="PF01966">
    <property type="entry name" value="HD"/>
    <property type="match status" value="1"/>
</dbReference>
<dbReference type="SMART" id="SM00471">
    <property type="entry name" value="HDc"/>
    <property type="match status" value="1"/>
</dbReference>
<dbReference type="SUPFAM" id="SSF109604">
    <property type="entry name" value="HD-domain/PDEase-like"/>
    <property type="match status" value="1"/>
</dbReference>
<dbReference type="PROSITE" id="PS51831">
    <property type="entry name" value="HD"/>
    <property type="match status" value="1"/>
</dbReference>
<keyword id="KW-0456">Lyase</keyword>
<keyword id="KW-1185">Reference proteome</keyword>
<keyword id="KW-0862">Zinc</keyword>
<sequence length="225" mass="25152">MSQYGFVRVPREVEKAIPVVNAPRPRAVVPPPNSETARLVREYAAKELTAPVLNHSLRVFQYSVAIIRDQFPAWDLDQEVLYVTCLLHDIATTDKNMRATKMSFEYYGGILSRELVFNATGGNQDYADAVTEAIIRHQDLTGTGYITTLGLILQIATTLDNVGSNTDLIHIDTVSAINEQFPRLHWLSCFATVVDTENSRKPWGHTSSLGDDFSKKVICNTFGYN</sequence>